<dbReference type="EMBL" id="AE017224">
    <property type="protein sequence ID" value="AAX75520.1"/>
    <property type="molecule type" value="Genomic_DNA"/>
</dbReference>
<dbReference type="RefSeq" id="WP_002970474.1">
    <property type="nucleotide sequence ID" value="NC_006933.1"/>
</dbReference>
<dbReference type="CAZy" id="GH23">
    <property type="family name" value="Glycoside Hydrolase Family 23"/>
</dbReference>
<dbReference type="EnsemblBacteria" id="AAX75520">
    <property type="protein sequence ID" value="AAX75520"/>
    <property type="gene ID" value="BruAb2_0069"/>
</dbReference>
<dbReference type="KEGG" id="bmb:BruAb2_0069"/>
<dbReference type="HOGENOM" id="CLU_076837_0_0_5"/>
<dbReference type="PRO" id="PR:P0C398"/>
<dbReference type="Proteomes" id="UP000000540">
    <property type="component" value="Chromosome II"/>
</dbReference>
<dbReference type="CDD" id="cd16892">
    <property type="entry name" value="LT_VirB1-like"/>
    <property type="match status" value="1"/>
</dbReference>
<dbReference type="Gene3D" id="1.10.530.10">
    <property type="match status" value="1"/>
</dbReference>
<dbReference type="InterPro" id="IPR023346">
    <property type="entry name" value="Lysozyme-like_dom_sf"/>
</dbReference>
<dbReference type="InterPro" id="IPR008258">
    <property type="entry name" value="Transglycosylase_SLT_dom_1"/>
</dbReference>
<dbReference type="Pfam" id="PF01464">
    <property type="entry name" value="SLT"/>
    <property type="match status" value="1"/>
</dbReference>
<dbReference type="SUPFAM" id="SSF53955">
    <property type="entry name" value="Lysozyme-like"/>
    <property type="match status" value="1"/>
</dbReference>
<feature type="chain" id="PRO_0000289552" description="Type IV secretion system protein virB1">
    <location>
        <begin position="1"/>
        <end position="238"/>
    </location>
</feature>
<feature type="region of interest" description="Disordered" evidence="2">
    <location>
        <begin position="197"/>
        <end position="238"/>
    </location>
</feature>
<feature type="compositionally biased region" description="Polar residues" evidence="2">
    <location>
        <begin position="198"/>
        <end position="209"/>
    </location>
</feature>
<reference key="1">
    <citation type="journal article" date="2005" name="J. Bacteriol.">
        <title>Completion of the genome sequence of Brucella abortus and comparison to the highly similar genomes of Brucella melitensis and Brucella suis.</title>
        <authorList>
            <person name="Halling S.M."/>
            <person name="Peterson-Burch B.D."/>
            <person name="Bricker B.J."/>
            <person name="Zuerner R.L."/>
            <person name="Qing Z."/>
            <person name="Li L.-L."/>
            <person name="Kapur V."/>
            <person name="Alt D.P."/>
            <person name="Olsen S.C."/>
        </authorList>
    </citation>
    <scope>NUCLEOTIDE SEQUENCE [LARGE SCALE GENOMIC DNA]</scope>
    <source>
        <strain>9-941</strain>
    </source>
</reference>
<organism>
    <name type="scientific">Brucella abortus biovar 1 (strain 9-941)</name>
    <dbReference type="NCBI Taxonomy" id="262698"/>
    <lineage>
        <taxon>Bacteria</taxon>
        <taxon>Pseudomonadati</taxon>
        <taxon>Pseudomonadota</taxon>
        <taxon>Alphaproteobacteria</taxon>
        <taxon>Hyphomicrobiales</taxon>
        <taxon>Brucellaceae</taxon>
        <taxon>Brucella/Ochrobactrum group</taxon>
        <taxon>Brucella</taxon>
    </lineage>
</organism>
<keyword id="KW-0843">Virulence</keyword>
<accession>P0C398</accession>
<accession>Q57A14</accession>
<accession>Q9KIT0</accession>
<comment type="function">
    <text evidence="1">The virB operon is essential for intracellular survival and is not involved in the invasion process. Constitutes a major determinant of virulence in mice (By similarity).</text>
</comment>
<comment type="similarity">
    <text evidence="3">Belongs to the virb1 family.</text>
</comment>
<sequence length="238" mass="25258">MVPFLVLAQQCAPTVAPQTMAAIVQVESGFNPYAIGVVGGRLVRQPVSLDEAITTAQSLEAKGWNFSLGIAQVNRYNLPKYGSTYAQAFDPCKNLKMGSKILEDCYRRAIVKMPGQEQGALRAAFSCYYAGNFTGGFKTKPGSPSYVQKVVASADVTTKPIVVVPMIRKTPDAAAAVAAPVKKRQPADRNSVLVDLHPSSQSMPATGTANAPVRLKTEQPATTDAPPGKDNTDGVVVF</sequence>
<protein>
    <recommendedName>
        <fullName>Type IV secretion system protein virB1</fullName>
    </recommendedName>
</protein>
<evidence type="ECO:0000250" key="1"/>
<evidence type="ECO:0000256" key="2">
    <source>
        <dbReference type="SAM" id="MobiDB-lite"/>
    </source>
</evidence>
<evidence type="ECO:0000305" key="3"/>
<proteinExistence type="inferred from homology"/>
<name>VIRB1_BRUAB</name>
<gene>
    <name type="primary">virB1</name>
    <name type="ordered locus">BruAb2_0069</name>
</gene>